<dbReference type="EMBL" id="AF031471">
    <property type="protein sequence ID" value="AAC15474.2"/>
    <property type="molecule type" value="mRNA"/>
</dbReference>
<dbReference type="SMR" id="O64943"/>
<dbReference type="Allergome" id="3341">
    <property type="allergen name" value="Jun o 4.0101"/>
</dbReference>
<dbReference type="Allergome" id="430">
    <property type="allergen name" value="Jun o 4"/>
</dbReference>
<dbReference type="GO" id="GO:0005509">
    <property type="term" value="F:calcium ion binding"/>
    <property type="evidence" value="ECO:0007669"/>
    <property type="project" value="InterPro"/>
</dbReference>
<dbReference type="CDD" id="cd00051">
    <property type="entry name" value="EFh"/>
    <property type="match status" value="2"/>
</dbReference>
<dbReference type="FunFam" id="1.10.238.10:FF:000003">
    <property type="entry name" value="Calmodulin A"/>
    <property type="match status" value="1"/>
</dbReference>
<dbReference type="Gene3D" id="1.10.238.10">
    <property type="entry name" value="EF-hand"/>
    <property type="match status" value="2"/>
</dbReference>
<dbReference type="InterPro" id="IPR011992">
    <property type="entry name" value="EF-hand-dom_pair"/>
</dbReference>
<dbReference type="InterPro" id="IPR018247">
    <property type="entry name" value="EF_Hand_1_Ca_BS"/>
</dbReference>
<dbReference type="InterPro" id="IPR002048">
    <property type="entry name" value="EF_hand_dom"/>
</dbReference>
<dbReference type="InterPro" id="IPR039647">
    <property type="entry name" value="EF_hand_pair_protein_CML-like"/>
</dbReference>
<dbReference type="PANTHER" id="PTHR10891">
    <property type="entry name" value="EF-HAND CALCIUM-BINDING DOMAIN CONTAINING PROTEIN"/>
    <property type="match status" value="1"/>
</dbReference>
<dbReference type="Pfam" id="PF13499">
    <property type="entry name" value="EF-hand_7"/>
    <property type="match status" value="2"/>
</dbReference>
<dbReference type="SMART" id="SM00054">
    <property type="entry name" value="EFh"/>
    <property type="match status" value="4"/>
</dbReference>
<dbReference type="SUPFAM" id="SSF47473">
    <property type="entry name" value="EF-hand"/>
    <property type="match status" value="1"/>
</dbReference>
<dbReference type="PROSITE" id="PS00018">
    <property type="entry name" value="EF_HAND_1"/>
    <property type="match status" value="4"/>
</dbReference>
<dbReference type="PROSITE" id="PS50222">
    <property type="entry name" value="EF_HAND_2"/>
    <property type="match status" value="4"/>
</dbReference>
<proteinExistence type="evidence at protein level"/>
<comment type="allergen">
    <text>Causes an allergic reaction in human. Binds to IgE.</text>
</comment>
<evidence type="ECO:0000255" key="1">
    <source>
        <dbReference type="PROSITE-ProRule" id="PRU00448"/>
    </source>
</evidence>
<feature type="chain" id="PRO_0000073673" description="Polcalcin Jun o 2">
    <location>
        <begin position="1"/>
        <end position="165"/>
    </location>
</feature>
<feature type="domain" description="EF-hand 1" evidence="1">
    <location>
        <begin position="22"/>
        <end position="57"/>
    </location>
</feature>
<feature type="domain" description="EF-hand 2" evidence="1">
    <location>
        <begin position="58"/>
        <end position="86"/>
    </location>
</feature>
<feature type="domain" description="EF-hand 3" evidence="1">
    <location>
        <begin position="91"/>
        <end position="126"/>
    </location>
</feature>
<feature type="domain" description="EF-hand 4" evidence="1">
    <location>
        <begin position="127"/>
        <end position="162"/>
    </location>
</feature>
<feature type="binding site" evidence="1">
    <location>
        <position position="35"/>
    </location>
    <ligand>
        <name>Ca(2+)</name>
        <dbReference type="ChEBI" id="CHEBI:29108"/>
        <label>1</label>
    </ligand>
</feature>
<feature type="binding site" evidence="1">
    <location>
        <position position="37"/>
    </location>
    <ligand>
        <name>Ca(2+)</name>
        <dbReference type="ChEBI" id="CHEBI:29108"/>
        <label>1</label>
    </ligand>
</feature>
<feature type="binding site" evidence="1">
    <location>
        <position position="39"/>
    </location>
    <ligand>
        <name>Ca(2+)</name>
        <dbReference type="ChEBI" id="CHEBI:29108"/>
        <label>1</label>
    </ligand>
</feature>
<feature type="binding site" evidence="1">
    <location>
        <position position="41"/>
    </location>
    <ligand>
        <name>Ca(2+)</name>
        <dbReference type="ChEBI" id="CHEBI:29108"/>
        <label>1</label>
    </ligand>
</feature>
<feature type="binding site" evidence="1">
    <location>
        <position position="46"/>
    </location>
    <ligand>
        <name>Ca(2+)</name>
        <dbReference type="ChEBI" id="CHEBI:29108"/>
        <label>1</label>
    </ligand>
</feature>
<feature type="binding site" evidence="1">
    <location>
        <position position="71"/>
    </location>
    <ligand>
        <name>Ca(2+)</name>
        <dbReference type="ChEBI" id="CHEBI:29108"/>
        <label>2</label>
    </ligand>
</feature>
<feature type="binding site" evidence="1">
    <location>
        <position position="73"/>
    </location>
    <ligand>
        <name>Ca(2+)</name>
        <dbReference type="ChEBI" id="CHEBI:29108"/>
        <label>2</label>
    </ligand>
</feature>
<feature type="binding site" evidence="1">
    <location>
        <position position="75"/>
    </location>
    <ligand>
        <name>Ca(2+)</name>
        <dbReference type="ChEBI" id="CHEBI:29108"/>
        <label>2</label>
    </ligand>
</feature>
<feature type="binding site" evidence="1">
    <location>
        <position position="77"/>
    </location>
    <ligand>
        <name>Ca(2+)</name>
        <dbReference type="ChEBI" id="CHEBI:29108"/>
        <label>2</label>
    </ligand>
</feature>
<feature type="binding site" evidence="1">
    <location>
        <position position="82"/>
    </location>
    <ligand>
        <name>Ca(2+)</name>
        <dbReference type="ChEBI" id="CHEBI:29108"/>
        <label>2</label>
    </ligand>
</feature>
<feature type="binding site" evidence="1">
    <location>
        <position position="104"/>
    </location>
    <ligand>
        <name>Ca(2+)</name>
        <dbReference type="ChEBI" id="CHEBI:29108"/>
        <label>3</label>
    </ligand>
</feature>
<feature type="binding site" evidence="1">
    <location>
        <position position="106"/>
    </location>
    <ligand>
        <name>Ca(2+)</name>
        <dbReference type="ChEBI" id="CHEBI:29108"/>
        <label>3</label>
    </ligand>
</feature>
<feature type="binding site" evidence="1">
    <location>
        <position position="108"/>
    </location>
    <ligand>
        <name>Ca(2+)</name>
        <dbReference type="ChEBI" id="CHEBI:29108"/>
        <label>3</label>
    </ligand>
</feature>
<feature type="binding site" evidence="1">
    <location>
        <position position="110"/>
    </location>
    <ligand>
        <name>Ca(2+)</name>
        <dbReference type="ChEBI" id="CHEBI:29108"/>
        <label>3</label>
    </ligand>
</feature>
<feature type="binding site" evidence="1">
    <location>
        <position position="115"/>
    </location>
    <ligand>
        <name>Ca(2+)</name>
        <dbReference type="ChEBI" id="CHEBI:29108"/>
        <label>3</label>
    </ligand>
</feature>
<feature type="binding site" evidence="1">
    <location>
        <position position="140"/>
    </location>
    <ligand>
        <name>Ca(2+)</name>
        <dbReference type="ChEBI" id="CHEBI:29108"/>
        <label>4</label>
    </ligand>
</feature>
<feature type="binding site" evidence="1">
    <location>
        <position position="142"/>
    </location>
    <ligand>
        <name>Ca(2+)</name>
        <dbReference type="ChEBI" id="CHEBI:29108"/>
        <label>4</label>
    </ligand>
</feature>
<feature type="binding site" evidence="1">
    <location>
        <position position="144"/>
    </location>
    <ligand>
        <name>Ca(2+)</name>
        <dbReference type="ChEBI" id="CHEBI:29108"/>
        <label>4</label>
    </ligand>
</feature>
<feature type="binding site" evidence="1">
    <location>
        <position position="151"/>
    </location>
    <ligand>
        <name>Ca(2+)</name>
        <dbReference type="ChEBI" id="CHEBI:29108"/>
        <label>4</label>
    </ligand>
</feature>
<accession>O64943</accession>
<name>POLC2_JUNOX</name>
<protein>
    <recommendedName>
        <fullName>Polcalcin Jun o 2</fullName>
    </recommendedName>
    <alternativeName>
        <fullName>Calcium-binding pollen allergen Jun o 2</fullName>
    </alternativeName>
    <allergenName>Jun o 2</allergenName>
</protein>
<keyword id="KW-0020">Allergen</keyword>
<keyword id="KW-0106">Calcium</keyword>
<keyword id="KW-0479">Metal-binding</keyword>
<keyword id="KW-0677">Repeat</keyword>
<organism>
    <name type="scientific">Juniperus oxycedrus</name>
    <name type="common">Prickly juniper</name>
    <dbReference type="NCBI Taxonomy" id="69008"/>
    <lineage>
        <taxon>Eukaryota</taxon>
        <taxon>Viridiplantae</taxon>
        <taxon>Streptophyta</taxon>
        <taxon>Embryophyta</taxon>
        <taxon>Tracheophyta</taxon>
        <taxon>Spermatophyta</taxon>
        <taxon>Pinopsida</taxon>
        <taxon>Pinidae</taxon>
        <taxon>Conifers II</taxon>
        <taxon>Cupressales</taxon>
        <taxon>Cupressaceae</taxon>
        <taxon>Juniperus</taxon>
    </lineage>
</organism>
<sequence>MDEVPSSDGSKSACSGEVVMEQSVHELEEVFKKFDANGDGKISGSELADILRSLGSDVGEAEVKAMMEEADADGDGYVSLQEFVDLNNKGASVKDLKNAFKVFDRDCNGSISAAELCHTLESVGEPCTIEESKNIIHNVDKNGDGLISVEEFQTMMTSEMTDKSK</sequence>
<reference key="1">
    <citation type="journal article" date="1998" name="J. Allergy Clin. Immunol.">
        <title>Molecular characterization of a cross-reactive Juniperus oxycedrus pollen allergen, Jun o 2: a novel calcium-binding allergen.</title>
        <authorList>
            <person name="Tinghino R."/>
            <person name="Barletta B."/>
            <person name="Palumbo S."/>
            <person name="Afferni C."/>
            <person name="Iacovacci P."/>
            <person name="Mari A."/>
            <person name="Di Felice G."/>
            <person name="Pini C."/>
        </authorList>
    </citation>
    <scope>NUCLEOTIDE SEQUENCE [MRNA]</scope>
    <source>
        <tissue>Pollen</tissue>
    </source>
</reference>